<keyword id="KW-0025">Alternative splicing</keyword>
<keyword id="KW-0052">Apoplast</keyword>
<keyword id="KW-1185">Reference proteome</keyword>
<keyword id="KW-0964">Secreted</keyword>
<keyword id="KW-0732">Signal</keyword>
<dbReference type="EMBL" id="AC007171">
    <property type="protein sequence ID" value="AAD24368.1"/>
    <property type="molecule type" value="Genomic_DNA"/>
</dbReference>
<dbReference type="EMBL" id="CP002685">
    <property type="protein sequence ID" value="AEC08158.1"/>
    <property type="molecule type" value="Genomic_DNA"/>
</dbReference>
<dbReference type="EMBL" id="BT002889">
    <property type="protein sequence ID" value="AAO22706.1"/>
    <property type="molecule type" value="mRNA"/>
</dbReference>
<dbReference type="EMBL" id="BT015768">
    <property type="protein sequence ID" value="AAU90058.1"/>
    <property type="molecule type" value="mRNA"/>
</dbReference>
<dbReference type="PIR" id="G84687">
    <property type="entry name" value="G84687"/>
</dbReference>
<dbReference type="RefSeq" id="NP_001154539.1">
    <molecule id="Q9SIA8-2"/>
    <property type="nucleotide sequence ID" value="NM_001161067.1"/>
</dbReference>
<dbReference type="SMR" id="Q9SIA8"/>
<dbReference type="FunCoup" id="Q9SIA8">
    <property type="interactions" value="358"/>
</dbReference>
<dbReference type="STRING" id="3702.Q9SIA8"/>
<dbReference type="PaxDb" id="3702-AT2G28670.1"/>
<dbReference type="EnsemblPlants" id="AT2G28670.2">
    <molecule id="Q9SIA8-2"/>
    <property type="protein sequence ID" value="AT2G28670.2"/>
    <property type="gene ID" value="AT2G28670"/>
</dbReference>
<dbReference type="GeneID" id="817416"/>
<dbReference type="Gramene" id="AT2G28670.2">
    <molecule id="Q9SIA8-2"/>
    <property type="protein sequence ID" value="AT2G28670.2"/>
    <property type="gene ID" value="AT2G28670"/>
</dbReference>
<dbReference type="KEGG" id="ath:AT2G28670"/>
<dbReference type="Araport" id="AT2G28670"/>
<dbReference type="TAIR" id="AT2G28670">
    <property type="gene designation" value="ESB1"/>
</dbReference>
<dbReference type="HOGENOM" id="CLU_059816_0_0_1"/>
<dbReference type="InParanoid" id="Q9SIA8"/>
<dbReference type="OMA" id="FGVHRIG"/>
<dbReference type="OrthoDB" id="1921494at2759"/>
<dbReference type="PhylomeDB" id="Q9SIA8"/>
<dbReference type="PRO" id="PR:Q9SIA8"/>
<dbReference type="Proteomes" id="UP000006548">
    <property type="component" value="Chromosome 2"/>
</dbReference>
<dbReference type="ExpressionAtlas" id="Q9SIA8">
    <property type="expression patterns" value="baseline and differential"/>
</dbReference>
<dbReference type="GO" id="GO:0048046">
    <property type="term" value="C:apoplast"/>
    <property type="evidence" value="ECO:0007669"/>
    <property type="project" value="UniProtKB-SubCell"/>
</dbReference>
<dbReference type="GO" id="GO:0048226">
    <property type="term" value="C:Casparian strip"/>
    <property type="evidence" value="ECO:0000314"/>
    <property type="project" value="TAIR"/>
</dbReference>
<dbReference type="GO" id="GO:0009809">
    <property type="term" value="P:lignin biosynthetic process"/>
    <property type="evidence" value="ECO:0000315"/>
    <property type="project" value="TAIR"/>
</dbReference>
<dbReference type="GO" id="GO:0010345">
    <property type="term" value="P:suberin biosynthetic process"/>
    <property type="evidence" value="ECO:0000315"/>
    <property type="project" value="TAIR"/>
</dbReference>
<dbReference type="FunFam" id="2.40.480.10:FF:000003">
    <property type="entry name" value="Dirigent protein"/>
    <property type="match status" value="1"/>
</dbReference>
<dbReference type="Gene3D" id="2.40.480.10">
    <property type="entry name" value="Allene oxide cyclase-like"/>
    <property type="match status" value="1"/>
</dbReference>
<dbReference type="InterPro" id="IPR044859">
    <property type="entry name" value="Allene_oxi_cyc_Dirigent"/>
</dbReference>
<dbReference type="InterPro" id="IPR004265">
    <property type="entry name" value="Dirigent"/>
</dbReference>
<dbReference type="PANTHER" id="PTHR46215:SF25">
    <property type="entry name" value="DIRIGENT PROTEIN 10"/>
    <property type="match status" value="1"/>
</dbReference>
<dbReference type="PANTHER" id="PTHR46215">
    <property type="entry name" value="DIRIGENT PROTEIN 24-RELATED"/>
    <property type="match status" value="1"/>
</dbReference>
<dbReference type="Pfam" id="PF03018">
    <property type="entry name" value="Dirigent"/>
    <property type="match status" value="1"/>
</dbReference>
<evidence type="ECO:0000250" key="1"/>
<evidence type="ECO:0000255" key="2"/>
<evidence type="ECO:0000256" key="3">
    <source>
        <dbReference type="SAM" id="MobiDB-lite"/>
    </source>
</evidence>
<evidence type="ECO:0000269" key="4">
    <source>
    </source>
</evidence>
<evidence type="ECO:0000269" key="5">
    <source>
    </source>
</evidence>
<evidence type="ECO:0000269" key="6">
    <source>
    </source>
</evidence>
<evidence type="ECO:0000305" key="7"/>
<proteinExistence type="evidence at transcript level"/>
<protein>
    <recommendedName>
        <fullName>Dirigent protein 10</fullName>
        <shortName>AtDIR10</shortName>
    </recommendedName>
    <alternativeName>
        <fullName>Protein ENHANCED SUBERIN 1</fullName>
    </alternativeName>
</protein>
<comment type="function">
    <text evidence="1 4 5">Dirigent proteins impart stereoselectivity on the phenoxy radical-coupling reaction, yielding optically active lignans from two molecules of coniferyl alcohol in the biosynthesis of lignans, flavonolignans, and alkaloids and thus plays a central role in plant secondary metabolism (By similarity). Regulates suberin accumulation in roots.</text>
</comment>
<comment type="subunit">
    <text evidence="1">Homodimer.</text>
</comment>
<comment type="subcellular location">
    <subcellularLocation>
        <location evidence="1">Secreted</location>
        <location evidence="1">Extracellular space</location>
        <location evidence="1">Apoplast</location>
    </subcellularLocation>
</comment>
<comment type="alternative products">
    <event type="alternative splicing"/>
    <isoform>
        <id>Q9SIA8-1</id>
        <name>1</name>
        <sequence type="displayed"/>
    </isoform>
    <isoform>
        <id>Q9SIA8-2</id>
        <name>2</name>
        <sequence type="described" ref="VSP_047338"/>
    </isoform>
</comment>
<comment type="tissue specificity">
    <text evidence="6">In roots, mostly detected in root endodermis and quiescent center, and, to a lower extent, in root stele and cortex. Expressed in root vascular cylinder, flowers, siliques, cotyledon and leaf veins, and leaf margins. Present in the basal region of rosette leaf trichomes and in developing xylem.</text>
</comment>
<comment type="developmental stage">
    <text evidence="6">In flowers, localized to vasculature of the stamen filament, in anthers and papillar cells of the stigma. In siliques, mostly expressed in the abscission zone.</text>
</comment>
<comment type="disruption phenotype">
    <text evidence="4 5">Increased root suberin accumulation characterized by an increased aliphatic monomer content in suberin. Reduced day time transpiration rates and increased water-use efficiency during the vegetative growth period. Decreases in the accumulation of Ca, Mn, and Zn and increases in the accumulation of Na, S, K, As, Se, and Mo in the shoot.</text>
</comment>
<comment type="similarity">
    <text evidence="7">Belongs to the plant dirigent protein family.</text>
</comment>
<name>DIR10_ARATH</name>
<sequence>MAGQKILSLLVIALVVTFAAAARLLDEENAFSATTTTLGSGSGSTGIGFGAGTGSSGSGSTGFGFGAGSGSSGSGSTGSGLGAGTGSIPSSGSGPGLLPTASSVPGSLAGGGSGSLPTTGSATGAGAGTGSALGGGPGAGSALGGGAGAGPALGGGAGAGPALGGGAGAGSALGGGGAGAGPALGGGGAGAGPALGGGVAGSGSALGGGASAGPDNTLVFFMHDILGGSNPTARAVTGVVANPALSGQLPFAKPNGANLPVSNGVPSNNNNNGIVNNNNVPFLVGLGGTTANILQNNNNGNNILNGFPVASGGQLPSGSALQMLMFGTMTVIDDELTEGHELGSGLLGKAQGYYVASAIDGTSQTMAFTAMFESGGYEDSISFFGVLRTAVSESHIGVMGGTGKYVNARGFAILKTFTGSSGTQQNQPHQFTDGLETVVECTVYLSY</sequence>
<gene>
    <name type="primary">DIR10</name>
    <name type="synonym">ESB1</name>
    <name type="ordered locus">At2g28670</name>
    <name type="ORF">T8O18.4</name>
</gene>
<accession>Q9SIA8</accession>
<accession>F4IIT2</accession>
<feature type="signal peptide" evidence="2">
    <location>
        <begin position="1"/>
        <end position="21"/>
    </location>
</feature>
<feature type="chain" id="PRO_0000422841" description="Dirigent protein 10">
    <location>
        <begin position="22"/>
        <end position="447"/>
    </location>
</feature>
<feature type="region of interest" description="Disordered" evidence="3">
    <location>
        <begin position="74"/>
        <end position="123"/>
    </location>
</feature>
<feature type="compositionally biased region" description="Gly residues" evidence="3">
    <location>
        <begin position="74"/>
        <end position="85"/>
    </location>
</feature>
<feature type="compositionally biased region" description="Low complexity" evidence="3">
    <location>
        <begin position="86"/>
        <end position="107"/>
    </location>
</feature>
<feature type="splice variant" id="VSP_047338" description="In isoform 2." evidence="7">
    <location>
        <begin position="1"/>
        <end position="221"/>
    </location>
</feature>
<reference key="1">
    <citation type="journal article" date="1999" name="Nature">
        <title>Sequence and analysis of chromosome 2 of the plant Arabidopsis thaliana.</title>
        <authorList>
            <person name="Lin X."/>
            <person name="Kaul S."/>
            <person name="Rounsley S.D."/>
            <person name="Shea T.P."/>
            <person name="Benito M.-I."/>
            <person name="Town C.D."/>
            <person name="Fujii C.Y."/>
            <person name="Mason T.M."/>
            <person name="Bowman C.L."/>
            <person name="Barnstead M.E."/>
            <person name="Feldblyum T.V."/>
            <person name="Buell C.R."/>
            <person name="Ketchum K.A."/>
            <person name="Lee J.J."/>
            <person name="Ronning C.M."/>
            <person name="Koo H.L."/>
            <person name="Moffat K.S."/>
            <person name="Cronin L.A."/>
            <person name="Shen M."/>
            <person name="Pai G."/>
            <person name="Van Aken S."/>
            <person name="Umayam L."/>
            <person name="Tallon L.J."/>
            <person name="Gill J.E."/>
            <person name="Adams M.D."/>
            <person name="Carrera A.J."/>
            <person name="Creasy T.H."/>
            <person name="Goodman H.M."/>
            <person name="Somerville C.R."/>
            <person name="Copenhaver G.P."/>
            <person name="Preuss D."/>
            <person name="Nierman W.C."/>
            <person name="White O."/>
            <person name="Eisen J.A."/>
            <person name="Salzberg S.L."/>
            <person name="Fraser C.M."/>
            <person name="Venter J.C."/>
        </authorList>
    </citation>
    <scope>NUCLEOTIDE SEQUENCE [LARGE SCALE GENOMIC DNA]</scope>
    <source>
        <strain>cv. Columbia</strain>
    </source>
</reference>
<reference key="2">
    <citation type="journal article" date="2017" name="Plant J.">
        <title>Araport11: a complete reannotation of the Arabidopsis thaliana reference genome.</title>
        <authorList>
            <person name="Cheng C.Y."/>
            <person name="Krishnakumar V."/>
            <person name="Chan A.P."/>
            <person name="Thibaud-Nissen F."/>
            <person name="Schobel S."/>
            <person name="Town C.D."/>
        </authorList>
    </citation>
    <scope>GENOME REANNOTATION</scope>
    <source>
        <strain>cv. Columbia</strain>
    </source>
</reference>
<reference key="3">
    <citation type="journal article" date="2003" name="Science">
        <title>Empirical analysis of transcriptional activity in the Arabidopsis genome.</title>
        <authorList>
            <person name="Yamada K."/>
            <person name="Lim J."/>
            <person name="Dale J.M."/>
            <person name="Chen H."/>
            <person name="Shinn P."/>
            <person name="Palm C.J."/>
            <person name="Southwick A.M."/>
            <person name="Wu H.C."/>
            <person name="Kim C.J."/>
            <person name="Nguyen M."/>
            <person name="Pham P.K."/>
            <person name="Cheuk R.F."/>
            <person name="Karlin-Newmann G."/>
            <person name="Liu S.X."/>
            <person name="Lam B."/>
            <person name="Sakano H."/>
            <person name="Wu T."/>
            <person name="Yu G."/>
            <person name="Miranda M."/>
            <person name="Quach H.L."/>
            <person name="Tripp M."/>
            <person name="Chang C.H."/>
            <person name="Lee J.M."/>
            <person name="Toriumi M.J."/>
            <person name="Chan M.M."/>
            <person name="Tang C.C."/>
            <person name="Onodera C.S."/>
            <person name="Deng J.M."/>
            <person name="Akiyama K."/>
            <person name="Ansari Y."/>
            <person name="Arakawa T."/>
            <person name="Banh J."/>
            <person name="Banno F."/>
            <person name="Bowser L."/>
            <person name="Brooks S.Y."/>
            <person name="Carninci P."/>
            <person name="Chao Q."/>
            <person name="Choy N."/>
            <person name="Enju A."/>
            <person name="Goldsmith A.D."/>
            <person name="Gurjal M."/>
            <person name="Hansen N.F."/>
            <person name="Hayashizaki Y."/>
            <person name="Johnson-Hopson C."/>
            <person name="Hsuan V.W."/>
            <person name="Iida K."/>
            <person name="Karnes M."/>
            <person name="Khan S."/>
            <person name="Koesema E."/>
            <person name="Ishida J."/>
            <person name="Jiang P.X."/>
            <person name="Jones T."/>
            <person name="Kawai J."/>
            <person name="Kamiya A."/>
            <person name="Meyers C."/>
            <person name="Nakajima M."/>
            <person name="Narusaka M."/>
            <person name="Seki M."/>
            <person name="Sakurai T."/>
            <person name="Satou M."/>
            <person name="Tamse R."/>
            <person name="Vaysberg M."/>
            <person name="Wallender E.K."/>
            <person name="Wong C."/>
            <person name="Yamamura Y."/>
            <person name="Yuan S."/>
            <person name="Shinozaki K."/>
            <person name="Davis R.W."/>
            <person name="Theologis A."/>
            <person name="Ecker J.R."/>
        </authorList>
    </citation>
    <scope>NUCLEOTIDE SEQUENCE [LARGE SCALE MRNA]</scope>
    <source>
        <strain>cv. Columbia</strain>
    </source>
</reference>
<reference key="4">
    <citation type="submission" date="2004-10" db="EMBL/GenBank/DDBJ databases">
        <title>Arabidopsis ORF clones.</title>
        <authorList>
            <person name="Shinn P."/>
            <person name="Chen H."/>
            <person name="Cheuk R.F."/>
            <person name="Kim C.J."/>
            <person name="Ecker J.R."/>
        </authorList>
    </citation>
    <scope>NUCLEOTIDE SEQUENCE [LARGE SCALE MRNA]</scope>
    <source>
        <strain>cv. Columbia</strain>
    </source>
</reference>
<reference key="5">
    <citation type="journal article" date="2007" name="Phytochemistry">
        <title>Dirigent proteins in conifer defense II: Extended gene discovery, phylogeny, and constitutive and stress-induced gene expression in spruce (Picea spp.).</title>
        <authorList>
            <person name="Ralph S.G."/>
            <person name="Jancsik S."/>
            <person name="Bohlmann J."/>
        </authorList>
    </citation>
    <scope>GENE FAMILY</scope>
    <scope>NOMENCLATURE</scope>
</reference>
<reference key="6">
    <citation type="journal article" date="2009" name="PLoS Genet.">
        <title>Root suberin forms an extracellular barrier that affects water relations and mineral nutrition in Arabidopsis.</title>
        <authorList>
            <person name="Baxter I."/>
            <person name="Hosmani P.S."/>
            <person name="Rus A."/>
            <person name="Lahner B."/>
            <person name="Borevitz J.O."/>
            <person name="Muthukumar B."/>
            <person name="Mickelbart M.V."/>
            <person name="Schreiber L."/>
            <person name="Franke R.B."/>
            <person name="Salt D.E."/>
        </authorList>
    </citation>
    <scope>FUNCTION</scope>
    <scope>DISRUPTION PHENOTYPE</scope>
    <source>
        <strain>cv. Columbia</strain>
    </source>
</reference>
<reference key="7">
    <citation type="journal article" date="2011" name="J. Exp. Bot.">
        <title>Water and solute permeabilities of Arabidopsis roots in relation to the amount and composition of aliphatic suberin.</title>
        <authorList>
            <person name="Ranathunge K."/>
            <person name="Schreiber L."/>
        </authorList>
    </citation>
    <scope>FUNCTION</scope>
    <scope>DISRUPTION PHENOTYPE</scope>
    <source>
        <strain>cv. Columbia</strain>
    </source>
</reference>
<reference key="8">
    <citation type="journal article" date="2012" name="J. Biol. Chem.">
        <title>Opposite stereoselectivities of dirigent proteins in Arabidopsis and schizandra species.</title>
        <authorList>
            <person name="Kim K.-W."/>
            <person name="Moinuddin S.G.A."/>
            <person name="Atwell K.M."/>
            <person name="Costa M.A."/>
            <person name="Davin L.B."/>
            <person name="Lewis N.G."/>
        </authorList>
    </citation>
    <scope>TISSUE SPECIFICITY</scope>
    <scope>DEVELOPMENTAL STAGE</scope>
    <scope>GENE FAMILY</scope>
    <source>
        <strain>cv. Columbia</strain>
    </source>
</reference>
<organism>
    <name type="scientific">Arabidopsis thaliana</name>
    <name type="common">Mouse-ear cress</name>
    <dbReference type="NCBI Taxonomy" id="3702"/>
    <lineage>
        <taxon>Eukaryota</taxon>
        <taxon>Viridiplantae</taxon>
        <taxon>Streptophyta</taxon>
        <taxon>Embryophyta</taxon>
        <taxon>Tracheophyta</taxon>
        <taxon>Spermatophyta</taxon>
        <taxon>Magnoliopsida</taxon>
        <taxon>eudicotyledons</taxon>
        <taxon>Gunneridae</taxon>
        <taxon>Pentapetalae</taxon>
        <taxon>rosids</taxon>
        <taxon>malvids</taxon>
        <taxon>Brassicales</taxon>
        <taxon>Brassicaceae</taxon>
        <taxon>Camelineae</taxon>
        <taxon>Arabidopsis</taxon>
    </lineage>
</organism>